<comment type="similarity">
    <text evidence="1">Belongs to the UPF0145 family.</text>
</comment>
<accession>Q64ZQ7</accession>
<name>Y270_BACFR</name>
<dbReference type="EMBL" id="AP006841">
    <property type="protein sequence ID" value="BAD47019.1"/>
    <property type="molecule type" value="Genomic_DNA"/>
</dbReference>
<dbReference type="RefSeq" id="WP_005779329.1">
    <property type="nucleotide sequence ID" value="NZ_UYXF01000014.1"/>
</dbReference>
<dbReference type="RefSeq" id="YP_097553.1">
    <property type="nucleotide sequence ID" value="NC_006347.1"/>
</dbReference>
<dbReference type="SMR" id="Q64ZQ7"/>
<dbReference type="STRING" id="295405.BF0270"/>
<dbReference type="KEGG" id="bfr:BF0270"/>
<dbReference type="PATRIC" id="fig|295405.11.peg.300"/>
<dbReference type="HOGENOM" id="CLU_117144_3_2_10"/>
<dbReference type="OrthoDB" id="9796448at2"/>
<dbReference type="Proteomes" id="UP000002197">
    <property type="component" value="Chromosome"/>
</dbReference>
<dbReference type="Gene3D" id="3.30.110.70">
    <property type="entry name" value="Hypothetical protein apc22750. Chain B"/>
    <property type="match status" value="1"/>
</dbReference>
<dbReference type="HAMAP" id="MF_00338">
    <property type="entry name" value="UPF0145"/>
    <property type="match status" value="1"/>
</dbReference>
<dbReference type="InterPro" id="IPR035439">
    <property type="entry name" value="UPF0145_dom_sf"/>
</dbReference>
<dbReference type="InterPro" id="IPR002765">
    <property type="entry name" value="UPF0145_YbjQ-like"/>
</dbReference>
<dbReference type="NCBIfam" id="NF002776">
    <property type="entry name" value="PRK02877.1"/>
    <property type="match status" value="1"/>
</dbReference>
<dbReference type="PANTHER" id="PTHR34068">
    <property type="entry name" value="UPF0145 PROTEIN YBJQ"/>
    <property type="match status" value="1"/>
</dbReference>
<dbReference type="PANTHER" id="PTHR34068:SF1">
    <property type="entry name" value="UPF0145 PROTEIN YBJQ"/>
    <property type="match status" value="1"/>
</dbReference>
<dbReference type="Pfam" id="PF01906">
    <property type="entry name" value="YbjQ_1"/>
    <property type="match status" value="1"/>
</dbReference>
<dbReference type="SUPFAM" id="SSF117782">
    <property type="entry name" value="YbjQ-like"/>
    <property type="match status" value="1"/>
</dbReference>
<protein>
    <recommendedName>
        <fullName evidence="1">UPF0145 protein BF0270</fullName>
    </recommendedName>
</protein>
<organism>
    <name type="scientific">Bacteroides fragilis (strain YCH46)</name>
    <dbReference type="NCBI Taxonomy" id="295405"/>
    <lineage>
        <taxon>Bacteria</taxon>
        <taxon>Pseudomonadati</taxon>
        <taxon>Bacteroidota</taxon>
        <taxon>Bacteroidia</taxon>
        <taxon>Bacteroidales</taxon>
        <taxon>Bacteroidaceae</taxon>
        <taxon>Bacteroides</taxon>
    </lineage>
</organism>
<reference key="1">
    <citation type="journal article" date="2004" name="Proc. Natl. Acad. Sci. U.S.A.">
        <title>Genomic analysis of Bacteroides fragilis reveals extensive DNA inversions regulating cell surface adaptation.</title>
        <authorList>
            <person name="Kuwahara T."/>
            <person name="Yamashita A."/>
            <person name="Hirakawa H."/>
            <person name="Nakayama H."/>
            <person name="Toh H."/>
            <person name="Okada N."/>
            <person name="Kuhara S."/>
            <person name="Hattori M."/>
            <person name="Hayashi T."/>
            <person name="Ohnishi Y."/>
        </authorList>
    </citation>
    <scope>NUCLEOTIDE SEQUENCE [LARGE SCALE GENOMIC DNA]</scope>
    <source>
        <strain>YCH46</strain>
    </source>
</reference>
<sequence length="106" mass="11318">MLLATTPIIEGKRITTYYGIVSGETIIGANVFRDFFASIRDIVGGRSGSYEEVLREAKDTALKEMSEQARQMGANAVIGVDLDYETVGGSGSMLMVTASGTAVFLE</sequence>
<gene>
    <name type="ordered locus">BF0270</name>
</gene>
<feature type="chain" id="PRO_0000225813" description="UPF0145 protein BF0270">
    <location>
        <begin position="1"/>
        <end position="106"/>
    </location>
</feature>
<evidence type="ECO:0000255" key="1">
    <source>
        <dbReference type="HAMAP-Rule" id="MF_00338"/>
    </source>
</evidence>
<proteinExistence type="inferred from homology"/>